<gene>
    <name evidence="1" type="primary">accD</name>
    <name type="ordered locus">Tcr_0805</name>
</gene>
<keyword id="KW-0067">ATP-binding</keyword>
<keyword id="KW-0963">Cytoplasm</keyword>
<keyword id="KW-0275">Fatty acid biosynthesis</keyword>
<keyword id="KW-0276">Fatty acid metabolism</keyword>
<keyword id="KW-0444">Lipid biosynthesis</keyword>
<keyword id="KW-0443">Lipid metabolism</keyword>
<keyword id="KW-0479">Metal-binding</keyword>
<keyword id="KW-0547">Nucleotide-binding</keyword>
<keyword id="KW-0808">Transferase</keyword>
<keyword id="KW-0862">Zinc</keyword>
<keyword id="KW-0863">Zinc-finger</keyword>
<protein>
    <recommendedName>
        <fullName evidence="1">Acetyl-coenzyme A carboxylase carboxyl transferase subunit beta</fullName>
        <shortName evidence="1">ACCase subunit beta</shortName>
        <shortName evidence="1">Acetyl-CoA carboxylase carboxyltransferase subunit beta</shortName>
        <ecNumber evidence="1">2.1.3.15</ecNumber>
    </recommendedName>
</protein>
<proteinExistence type="inferred from homology"/>
<name>ACCD_HYDCU</name>
<organism>
    <name type="scientific">Hydrogenovibrio crunogenus (strain DSM 25203 / XCL-2)</name>
    <name type="common">Thiomicrospira crunogena</name>
    <dbReference type="NCBI Taxonomy" id="317025"/>
    <lineage>
        <taxon>Bacteria</taxon>
        <taxon>Pseudomonadati</taxon>
        <taxon>Pseudomonadota</taxon>
        <taxon>Gammaproteobacteria</taxon>
        <taxon>Thiotrichales</taxon>
        <taxon>Piscirickettsiaceae</taxon>
        <taxon>Hydrogenovibrio</taxon>
    </lineage>
</organism>
<dbReference type="EC" id="2.1.3.15" evidence="1"/>
<dbReference type="EMBL" id="CP000109">
    <property type="protein sequence ID" value="ABB41401.1"/>
    <property type="molecule type" value="Genomic_DNA"/>
</dbReference>
<dbReference type="SMR" id="Q31HH2"/>
<dbReference type="STRING" id="317025.Tcr_0805"/>
<dbReference type="KEGG" id="tcx:Tcr_0805"/>
<dbReference type="eggNOG" id="COG0777">
    <property type="taxonomic scope" value="Bacteria"/>
</dbReference>
<dbReference type="HOGENOM" id="CLU_015486_1_0_6"/>
<dbReference type="OrthoDB" id="9772975at2"/>
<dbReference type="UniPathway" id="UPA00655">
    <property type="reaction ID" value="UER00711"/>
</dbReference>
<dbReference type="GO" id="GO:0009329">
    <property type="term" value="C:acetate CoA-transferase complex"/>
    <property type="evidence" value="ECO:0007669"/>
    <property type="project" value="TreeGrafter"/>
</dbReference>
<dbReference type="GO" id="GO:0003989">
    <property type="term" value="F:acetyl-CoA carboxylase activity"/>
    <property type="evidence" value="ECO:0007669"/>
    <property type="project" value="InterPro"/>
</dbReference>
<dbReference type="GO" id="GO:0005524">
    <property type="term" value="F:ATP binding"/>
    <property type="evidence" value="ECO:0007669"/>
    <property type="project" value="UniProtKB-KW"/>
</dbReference>
<dbReference type="GO" id="GO:0016743">
    <property type="term" value="F:carboxyl- or carbamoyltransferase activity"/>
    <property type="evidence" value="ECO:0007669"/>
    <property type="project" value="UniProtKB-UniRule"/>
</dbReference>
<dbReference type="GO" id="GO:0008270">
    <property type="term" value="F:zinc ion binding"/>
    <property type="evidence" value="ECO:0007669"/>
    <property type="project" value="UniProtKB-UniRule"/>
</dbReference>
<dbReference type="GO" id="GO:0006633">
    <property type="term" value="P:fatty acid biosynthetic process"/>
    <property type="evidence" value="ECO:0007669"/>
    <property type="project" value="UniProtKB-KW"/>
</dbReference>
<dbReference type="GO" id="GO:2001295">
    <property type="term" value="P:malonyl-CoA biosynthetic process"/>
    <property type="evidence" value="ECO:0007669"/>
    <property type="project" value="UniProtKB-UniRule"/>
</dbReference>
<dbReference type="Gene3D" id="3.90.226.10">
    <property type="entry name" value="2-enoyl-CoA Hydratase, Chain A, domain 1"/>
    <property type="match status" value="1"/>
</dbReference>
<dbReference type="HAMAP" id="MF_01395">
    <property type="entry name" value="AcetylCoA_CT_beta"/>
    <property type="match status" value="1"/>
</dbReference>
<dbReference type="InterPro" id="IPR034733">
    <property type="entry name" value="AcCoA_carboxyl_beta"/>
</dbReference>
<dbReference type="InterPro" id="IPR000438">
    <property type="entry name" value="Acetyl_CoA_COase_Trfase_b_su"/>
</dbReference>
<dbReference type="InterPro" id="IPR029045">
    <property type="entry name" value="ClpP/crotonase-like_dom_sf"/>
</dbReference>
<dbReference type="InterPro" id="IPR011762">
    <property type="entry name" value="COA_CT_N"/>
</dbReference>
<dbReference type="InterPro" id="IPR041010">
    <property type="entry name" value="Znf-ACC"/>
</dbReference>
<dbReference type="NCBIfam" id="TIGR00515">
    <property type="entry name" value="accD"/>
    <property type="match status" value="1"/>
</dbReference>
<dbReference type="PANTHER" id="PTHR42995">
    <property type="entry name" value="ACETYL-COENZYME A CARBOXYLASE CARBOXYL TRANSFERASE SUBUNIT BETA, CHLOROPLASTIC"/>
    <property type="match status" value="1"/>
</dbReference>
<dbReference type="PANTHER" id="PTHR42995:SF5">
    <property type="entry name" value="ACETYL-COENZYME A CARBOXYLASE CARBOXYL TRANSFERASE SUBUNIT BETA, CHLOROPLASTIC"/>
    <property type="match status" value="1"/>
</dbReference>
<dbReference type="Pfam" id="PF01039">
    <property type="entry name" value="Carboxyl_trans"/>
    <property type="match status" value="1"/>
</dbReference>
<dbReference type="Pfam" id="PF17848">
    <property type="entry name" value="Zn_ribbon_ACC"/>
    <property type="match status" value="1"/>
</dbReference>
<dbReference type="PRINTS" id="PR01070">
    <property type="entry name" value="ACCCTRFRASEB"/>
</dbReference>
<dbReference type="SUPFAM" id="SSF52096">
    <property type="entry name" value="ClpP/crotonase"/>
    <property type="match status" value="1"/>
</dbReference>
<dbReference type="PROSITE" id="PS50980">
    <property type="entry name" value="COA_CT_NTER"/>
    <property type="match status" value="1"/>
</dbReference>
<accession>Q31HH2</accession>
<feature type="chain" id="PRO_0000359082" description="Acetyl-coenzyme A carboxylase carboxyl transferase subunit beta">
    <location>
        <begin position="1"/>
        <end position="284"/>
    </location>
</feature>
<feature type="domain" description="CoA carboxyltransferase N-terminal" evidence="2">
    <location>
        <begin position="25"/>
        <end position="284"/>
    </location>
</feature>
<feature type="zinc finger region" description="C4-type" evidence="1">
    <location>
        <begin position="29"/>
        <end position="51"/>
    </location>
</feature>
<feature type="binding site" evidence="1">
    <location>
        <position position="29"/>
    </location>
    <ligand>
        <name>Zn(2+)</name>
        <dbReference type="ChEBI" id="CHEBI:29105"/>
    </ligand>
</feature>
<feature type="binding site" evidence="1">
    <location>
        <position position="32"/>
    </location>
    <ligand>
        <name>Zn(2+)</name>
        <dbReference type="ChEBI" id="CHEBI:29105"/>
    </ligand>
</feature>
<feature type="binding site" evidence="1">
    <location>
        <position position="48"/>
    </location>
    <ligand>
        <name>Zn(2+)</name>
        <dbReference type="ChEBI" id="CHEBI:29105"/>
    </ligand>
</feature>
<feature type="binding site" evidence="1">
    <location>
        <position position="51"/>
    </location>
    <ligand>
        <name>Zn(2+)</name>
        <dbReference type="ChEBI" id="CHEBI:29105"/>
    </ligand>
</feature>
<comment type="function">
    <text evidence="1">Component of the acetyl coenzyme A carboxylase (ACC) complex. Biotin carboxylase (BC) catalyzes the carboxylation of biotin on its carrier protein (BCCP) and then the CO(2) group is transferred by the transcarboxylase to acetyl-CoA to form malonyl-CoA.</text>
</comment>
<comment type="catalytic activity">
    <reaction evidence="1">
        <text>N(6)-carboxybiotinyl-L-lysyl-[protein] + acetyl-CoA = N(6)-biotinyl-L-lysyl-[protein] + malonyl-CoA</text>
        <dbReference type="Rhea" id="RHEA:54728"/>
        <dbReference type="Rhea" id="RHEA-COMP:10505"/>
        <dbReference type="Rhea" id="RHEA-COMP:10506"/>
        <dbReference type="ChEBI" id="CHEBI:57288"/>
        <dbReference type="ChEBI" id="CHEBI:57384"/>
        <dbReference type="ChEBI" id="CHEBI:83144"/>
        <dbReference type="ChEBI" id="CHEBI:83145"/>
        <dbReference type="EC" id="2.1.3.15"/>
    </reaction>
</comment>
<comment type="cofactor">
    <cofactor evidence="1">
        <name>Zn(2+)</name>
        <dbReference type="ChEBI" id="CHEBI:29105"/>
    </cofactor>
    <text evidence="1">Binds 1 zinc ion per subunit.</text>
</comment>
<comment type="pathway">
    <text evidence="1">Lipid metabolism; malonyl-CoA biosynthesis; malonyl-CoA from acetyl-CoA: step 1/1.</text>
</comment>
<comment type="subunit">
    <text evidence="1">Acetyl-CoA carboxylase is a heterohexamer composed of biotin carboxyl carrier protein (AccB), biotin carboxylase (AccC) and two subunits each of ACCase subunit alpha (AccA) and ACCase subunit beta (AccD).</text>
</comment>
<comment type="subcellular location">
    <subcellularLocation>
        <location evidence="1">Cytoplasm</location>
    </subcellularLocation>
</comment>
<comment type="similarity">
    <text evidence="1">Belongs to the AccD/PCCB family.</text>
</comment>
<evidence type="ECO:0000255" key="1">
    <source>
        <dbReference type="HAMAP-Rule" id="MF_01395"/>
    </source>
</evidence>
<evidence type="ECO:0000255" key="2">
    <source>
        <dbReference type="PROSITE-ProRule" id="PRU01136"/>
    </source>
</evidence>
<sequence length="284" mass="31480">MSWFEKILPSIKQVTERKKNVPEGLWTKCPKCESTLYRAEVRRNLEVCPKCDHHMRLGGRDRLEAFFDEGTGVEISAEVTPVDALKFKDIKPYKTRIAQAQKATGEKDSFITMTGKIQGLEVVAGAFEFKFMGGSMGSVMGEKFVRAVNEAIERRCPLIVFSASGGARMQEALFSLMQMAKTSAALGHLRANKLPFISVLTDPTMGGVSASFAMLGDLNIAEPKALIGFAGPRVIEQTVREKLPEGFQRSEFLLEHGAIDRIIHRHNLSDELASICRMLLQKSA</sequence>
<reference key="1">
    <citation type="journal article" date="2006" name="PLoS Biol.">
        <title>The genome of deep-sea vent chemolithoautotroph Thiomicrospira crunogena XCL-2.</title>
        <authorList>
            <person name="Scott K.M."/>
            <person name="Sievert S.M."/>
            <person name="Abril F.N."/>
            <person name="Ball L.A."/>
            <person name="Barrett C.J."/>
            <person name="Blake R.A."/>
            <person name="Boller A.J."/>
            <person name="Chain P.S.G."/>
            <person name="Clark J.A."/>
            <person name="Davis C.R."/>
            <person name="Detter C."/>
            <person name="Do K.F."/>
            <person name="Dobrinski K.P."/>
            <person name="Faza B.I."/>
            <person name="Fitzpatrick K.A."/>
            <person name="Freyermuth S.K."/>
            <person name="Harmer T.L."/>
            <person name="Hauser L.J."/>
            <person name="Huegler M."/>
            <person name="Kerfeld C.A."/>
            <person name="Klotz M.G."/>
            <person name="Kong W.W."/>
            <person name="Land M."/>
            <person name="Lapidus A."/>
            <person name="Larimer F.W."/>
            <person name="Longo D.L."/>
            <person name="Lucas S."/>
            <person name="Malfatti S.A."/>
            <person name="Massey S.E."/>
            <person name="Martin D.D."/>
            <person name="McCuddin Z."/>
            <person name="Meyer F."/>
            <person name="Moore J.L."/>
            <person name="Ocampo L.H. Jr."/>
            <person name="Paul J.H."/>
            <person name="Paulsen I.T."/>
            <person name="Reep D.K."/>
            <person name="Ren Q."/>
            <person name="Ross R.L."/>
            <person name="Sato P.Y."/>
            <person name="Thomas P."/>
            <person name="Tinkham L.E."/>
            <person name="Zeruth G.T."/>
        </authorList>
    </citation>
    <scope>NUCLEOTIDE SEQUENCE [LARGE SCALE GENOMIC DNA]</scope>
    <source>
        <strain>DSM 25203 / XCL-2</strain>
    </source>
</reference>